<accession>B3EDN1</accession>
<reference key="1">
    <citation type="submission" date="2008-05" db="EMBL/GenBank/DDBJ databases">
        <title>Complete sequence of Chlorobium limicola DSM 245.</title>
        <authorList>
            <consortium name="US DOE Joint Genome Institute"/>
            <person name="Lucas S."/>
            <person name="Copeland A."/>
            <person name="Lapidus A."/>
            <person name="Glavina del Rio T."/>
            <person name="Dalin E."/>
            <person name="Tice H."/>
            <person name="Bruce D."/>
            <person name="Goodwin L."/>
            <person name="Pitluck S."/>
            <person name="Schmutz J."/>
            <person name="Larimer F."/>
            <person name="Land M."/>
            <person name="Hauser L."/>
            <person name="Kyrpides N."/>
            <person name="Ovchinnikova G."/>
            <person name="Zhao F."/>
            <person name="Li T."/>
            <person name="Liu Z."/>
            <person name="Overmann J."/>
            <person name="Bryant D.A."/>
            <person name="Richardson P."/>
        </authorList>
    </citation>
    <scope>NUCLEOTIDE SEQUENCE [LARGE SCALE GENOMIC DNA]</scope>
    <source>
        <strain>DSM 245 / NBRC 103803 / 6330</strain>
    </source>
</reference>
<gene>
    <name evidence="1" type="primary">recF</name>
    <name type="ordered locus">Clim_0003</name>
</gene>
<protein>
    <recommendedName>
        <fullName evidence="1">DNA replication and repair protein RecF</fullName>
    </recommendedName>
</protein>
<organism>
    <name type="scientific">Chlorobium limicola (strain DSM 245 / NBRC 103803 / 6330)</name>
    <dbReference type="NCBI Taxonomy" id="290315"/>
    <lineage>
        <taxon>Bacteria</taxon>
        <taxon>Pseudomonadati</taxon>
        <taxon>Chlorobiota</taxon>
        <taxon>Chlorobiia</taxon>
        <taxon>Chlorobiales</taxon>
        <taxon>Chlorobiaceae</taxon>
        <taxon>Chlorobium/Pelodictyon group</taxon>
        <taxon>Chlorobium</taxon>
    </lineage>
</organism>
<evidence type="ECO:0000255" key="1">
    <source>
        <dbReference type="HAMAP-Rule" id="MF_00365"/>
    </source>
</evidence>
<keyword id="KW-0067">ATP-binding</keyword>
<keyword id="KW-0963">Cytoplasm</keyword>
<keyword id="KW-0227">DNA damage</keyword>
<keyword id="KW-0234">DNA repair</keyword>
<keyword id="KW-0235">DNA replication</keyword>
<keyword id="KW-0238">DNA-binding</keyword>
<keyword id="KW-0547">Nucleotide-binding</keyword>
<keyword id="KW-0742">SOS response</keyword>
<sequence length="363" mass="41002">MKIEQIQLVQFRNHKNLSYGPAEGINLLYGPNGSGKTSVLEGIHYCALTKGFVTAYDSECLAFGESFFLINGRFISDALKEDGVKVVYSRDNGKKLTVNGQDLTSFSQHIGSIPCITFSPAEMSVINGSPVERRRFLDNAICQADCRYLQSMLNYRRVLLQRNALLLQLKERVQSIEMLNVLTEQLSEYAADIVFARLRFLDEILPGLKAILSSVSVKEEPRITYRSSLVPSVYALTKEELINYFREQYAKKKQDEIARGLTAGGPHRDDIVFFLNQHEIKKYASQGQQRSFLIAMKMALYGYFSDKLNEKPVCLFDDLFSELDRSRVEVLFALLASFGQVFITATEKMHGPAVTTINIPEAI</sequence>
<dbReference type="EMBL" id="CP001097">
    <property type="protein sequence ID" value="ACD89111.1"/>
    <property type="molecule type" value="Genomic_DNA"/>
</dbReference>
<dbReference type="RefSeq" id="WP_012464992.1">
    <property type="nucleotide sequence ID" value="NC_010803.1"/>
</dbReference>
<dbReference type="SMR" id="B3EDN1"/>
<dbReference type="STRING" id="290315.Clim_0003"/>
<dbReference type="KEGG" id="cli:Clim_0003"/>
<dbReference type="eggNOG" id="COG1195">
    <property type="taxonomic scope" value="Bacteria"/>
</dbReference>
<dbReference type="HOGENOM" id="CLU_040267_0_1_10"/>
<dbReference type="OrthoDB" id="9803889at2"/>
<dbReference type="Proteomes" id="UP000008841">
    <property type="component" value="Chromosome"/>
</dbReference>
<dbReference type="GO" id="GO:0005737">
    <property type="term" value="C:cytoplasm"/>
    <property type="evidence" value="ECO:0007669"/>
    <property type="project" value="UniProtKB-SubCell"/>
</dbReference>
<dbReference type="GO" id="GO:0005524">
    <property type="term" value="F:ATP binding"/>
    <property type="evidence" value="ECO:0007669"/>
    <property type="project" value="UniProtKB-UniRule"/>
</dbReference>
<dbReference type="GO" id="GO:0016887">
    <property type="term" value="F:ATP hydrolysis activity"/>
    <property type="evidence" value="ECO:0007669"/>
    <property type="project" value="InterPro"/>
</dbReference>
<dbReference type="GO" id="GO:0003697">
    <property type="term" value="F:single-stranded DNA binding"/>
    <property type="evidence" value="ECO:0007669"/>
    <property type="project" value="UniProtKB-UniRule"/>
</dbReference>
<dbReference type="GO" id="GO:0006260">
    <property type="term" value="P:DNA replication"/>
    <property type="evidence" value="ECO:0007669"/>
    <property type="project" value="UniProtKB-UniRule"/>
</dbReference>
<dbReference type="GO" id="GO:0000731">
    <property type="term" value="P:DNA synthesis involved in DNA repair"/>
    <property type="evidence" value="ECO:0007669"/>
    <property type="project" value="TreeGrafter"/>
</dbReference>
<dbReference type="GO" id="GO:0006302">
    <property type="term" value="P:double-strand break repair"/>
    <property type="evidence" value="ECO:0007669"/>
    <property type="project" value="InterPro"/>
</dbReference>
<dbReference type="GO" id="GO:0009432">
    <property type="term" value="P:SOS response"/>
    <property type="evidence" value="ECO:0007669"/>
    <property type="project" value="UniProtKB-UniRule"/>
</dbReference>
<dbReference type="Gene3D" id="3.40.50.300">
    <property type="entry name" value="P-loop containing nucleotide triphosphate hydrolases"/>
    <property type="match status" value="1"/>
</dbReference>
<dbReference type="Gene3D" id="1.20.1050.90">
    <property type="entry name" value="RecF/RecN/SMC, N-terminal domain"/>
    <property type="match status" value="1"/>
</dbReference>
<dbReference type="HAMAP" id="MF_00365">
    <property type="entry name" value="RecF"/>
    <property type="match status" value="1"/>
</dbReference>
<dbReference type="InterPro" id="IPR001238">
    <property type="entry name" value="DNA-binding_RecF"/>
</dbReference>
<dbReference type="InterPro" id="IPR027417">
    <property type="entry name" value="P-loop_NTPase"/>
</dbReference>
<dbReference type="InterPro" id="IPR038729">
    <property type="entry name" value="Rad50/SbcC_AAA"/>
</dbReference>
<dbReference type="InterPro" id="IPR042174">
    <property type="entry name" value="RecF_2"/>
</dbReference>
<dbReference type="NCBIfam" id="TIGR00611">
    <property type="entry name" value="recf"/>
    <property type="match status" value="1"/>
</dbReference>
<dbReference type="PANTHER" id="PTHR32182">
    <property type="entry name" value="DNA REPLICATION AND REPAIR PROTEIN RECF"/>
    <property type="match status" value="1"/>
</dbReference>
<dbReference type="PANTHER" id="PTHR32182:SF0">
    <property type="entry name" value="DNA REPLICATION AND REPAIR PROTEIN RECF"/>
    <property type="match status" value="1"/>
</dbReference>
<dbReference type="Pfam" id="PF13476">
    <property type="entry name" value="AAA_23"/>
    <property type="match status" value="1"/>
</dbReference>
<dbReference type="SUPFAM" id="SSF52540">
    <property type="entry name" value="P-loop containing nucleoside triphosphate hydrolases"/>
    <property type="match status" value="1"/>
</dbReference>
<proteinExistence type="inferred from homology"/>
<comment type="function">
    <text evidence="1">The RecF protein is involved in DNA metabolism; it is required for DNA replication and normal SOS inducibility. RecF binds preferentially to single-stranded, linear DNA. It also seems to bind ATP.</text>
</comment>
<comment type="subcellular location">
    <subcellularLocation>
        <location evidence="1">Cytoplasm</location>
    </subcellularLocation>
</comment>
<comment type="similarity">
    <text evidence="1">Belongs to the RecF family.</text>
</comment>
<name>RECF_CHLL2</name>
<feature type="chain" id="PRO_1000205474" description="DNA replication and repair protein RecF">
    <location>
        <begin position="1"/>
        <end position="363"/>
    </location>
</feature>
<feature type="binding site" evidence="1">
    <location>
        <begin position="30"/>
        <end position="37"/>
    </location>
    <ligand>
        <name>ATP</name>
        <dbReference type="ChEBI" id="CHEBI:30616"/>
    </ligand>
</feature>